<organism>
    <name type="scientific">Cutibacterium acnes (strain DSM 16379 / KPA171202)</name>
    <name type="common">Propionibacterium acnes</name>
    <dbReference type="NCBI Taxonomy" id="267747"/>
    <lineage>
        <taxon>Bacteria</taxon>
        <taxon>Bacillati</taxon>
        <taxon>Actinomycetota</taxon>
        <taxon>Actinomycetes</taxon>
        <taxon>Propionibacteriales</taxon>
        <taxon>Propionibacteriaceae</taxon>
        <taxon>Cutibacterium</taxon>
    </lineage>
</organism>
<evidence type="ECO:0000255" key="1">
    <source>
        <dbReference type="HAMAP-Rule" id="MF_00191"/>
    </source>
</evidence>
<protein>
    <recommendedName>
        <fullName evidence="1">4-hydroxy-3-methylbut-2-enyl diphosphate reductase</fullName>
        <shortName evidence="1">HMBPP reductase</shortName>
        <ecNumber evidence="1">1.17.7.4</ecNumber>
    </recommendedName>
</protein>
<name>ISPH_CUTAK</name>
<dbReference type="EC" id="1.17.7.4" evidence="1"/>
<dbReference type="EMBL" id="AE017283">
    <property type="protein sequence ID" value="AAT82327.1"/>
    <property type="molecule type" value="Genomic_DNA"/>
</dbReference>
<dbReference type="RefSeq" id="WP_002515204.1">
    <property type="nucleotide sequence ID" value="NZ_CP025935.1"/>
</dbReference>
<dbReference type="SMR" id="Q6AA89"/>
<dbReference type="EnsemblBacteria" id="AAT82327">
    <property type="protein sequence ID" value="AAT82327"/>
    <property type="gene ID" value="PPA0572"/>
</dbReference>
<dbReference type="KEGG" id="pac:PPA0572"/>
<dbReference type="eggNOG" id="COG0761">
    <property type="taxonomic scope" value="Bacteria"/>
</dbReference>
<dbReference type="HOGENOM" id="CLU_027486_1_0_11"/>
<dbReference type="UniPathway" id="UPA00056">
    <property type="reaction ID" value="UER00097"/>
</dbReference>
<dbReference type="UniPathway" id="UPA00059">
    <property type="reaction ID" value="UER00105"/>
</dbReference>
<dbReference type="Proteomes" id="UP000000603">
    <property type="component" value="Chromosome"/>
</dbReference>
<dbReference type="GO" id="GO:0051539">
    <property type="term" value="F:4 iron, 4 sulfur cluster binding"/>
    <property type="evidence" value="ECO:0007669"/>
    <property type="project" value="UniProtKB-UniRule"/>
</dbReference>
<dbReference type="GO" id="GO:0051745">
    <property type="term" value="F:4-hydroxy-3-methylbut-2-enyl diphosphate reductase activity"/>
    <property type="evidence" value="ECO:0007669"/>
    <property type="project" value="UniProtKB-UniRule"/>
</dbReference>
<dbReference type="GO" id="GO:0046872">
    <property type="term" value="F:metal ion binding"/>
    <property type="evidence" value="ECO:0007669"/>
    <property type="project" value="UniProtKB-KW"/>
</dbReference>
<dbReference type="GO" id="GO:0050992">
    <property type="term" value="P:dimethylallyl diphosphate biosynthetic process"/>
    <property type="evidence" value="ECO:0007669"/>
    <property type="project" value="UniProtKB-UniRule"/>
</dbReference>
<dbReference type="GO" id="GO:0019288">
    <property type="term" value="P:isopentenyl diphosphate biosynthetic process, methylerythritol 4-phosphate pathway"/>
    <property type="evidence" value="ECO:0007669"/>
    <property type="project" value="UniProtKB-UniRule"/>
</dbReference>
<dbReference type="GO" id="GO:0016114">
    <property type="term" value="P:terpenoid biosynthetic process"/>
    <property type="evidence" value="ECO:0007669"/>
    <property type="project" value="UniProtKB-UniRule"/>
</dbReference>
<dbReference type="CDD" id="cd13944">
    <property type="entry name" value="lytB_ispH"/>
    <property type="match status" value="1"/>
</dbReference>
<dbReference type="Gene3D" id="3.40.50.11270">
    <property type="match status" value="1"/>
</dbReference>
<dbReference type="Gene3D" id="3.40.1010.20">
    <property type="entry name" value="4-hydroxy-3-methylbut-2-enyl diphosphate reductase, catalytic domain"/>
    <property type="match status" value="2"/>
</dbReference>
<dbReference type="HAMAP" id="MF_00191">
    <property type="entry name" value="IspH"/>
    <property type="match status" value="1"/>
</dbReference>
<dbReference type="InterPro" id="IPR003451">
    <property type="entry name" value="LytB/IspH"/>
</dbReference>
<dbReference type="NCBIfam" id="TIGR00216">
    <property type="entry name" value="ispH_lytB"/>
    <property type="match status" value="1"/>
</dbReference>
<dbReference type="NCBIfam" id="NF002189">
    <property type="entry name" value="PRK01045.1-3"/>
    <property type="match status" value="1"/>
</dbReference>
<dbReference type="NCBIfam" id="NF002190">
    <property type="entry name" value="PRK01045.1-4"/>
    <property type="match status" value="1"/>
</dbReference>
<dbReference type="PANTHER" id="PTHR30426">
    <property type="entry name" value="4-HYDROXY-3-METHYLBUT-2-ENYL DIPHOSPHATE REDUCTASE"/>
    <property type="match status" value="1"/>
</dbReference>
<dbReference type="PANTHER" id="PTHR30426:SF0">
    <property type="entry name" value="4-HYDROXY-3-METHYLBUT-2-ENYL DIPHOSPHATE REDUCTASE"/>
    <property type="match status" value="1"/>
</dbReference>
<dbReference type="Pfam" id="PF02401">
    <property type="entry name" value="LYTB"/>
    <property type="match status" value="1"/>
</dbReference>
<comment type="function">
    <text evidence="1">Catalyzes the conversion of 1-hydroxy-2-methyl-2-(E)-butenyl 4-diphosphate (HMBPP) into a mixture of isopentenyl diphosphate (IPP) and dimethylallyl diphosphate (DMAPP). Acts in the terminal step of the DOXP/MEP pathway for isoprenoid precursor biosynthesis.</text>
</comment>
<comment type="catalytic activity">
    <reaction evidence="1">
        <text>isopentenyl diphosphate + 2 oxidized [2Fe-2S]-[ferredoxin] + H2O = (2E)-4-hydroxy-3-methylbut-2-enyl diphosphate + 2 reduced [2Fe-2S]-[ferredoxin] + 2 H(+)</text>
        <dbReference type="Rhea" id="RHEA:24488"/>
        <dbReference type="Rhea" id="RHEA-COMP:10000"/>
        <dbReference type="Rhea" id="RHEA-COMP:10001"/>
        <dbReference type="ChEBI" id="CHEBI:15377"/>
        <dbReference type="ChEBI" id="CHEBI:15378"/>
        <dbReference type="ChEBI" id="CHEBI:33737"/>
        <dbReference type="ChEBI" id="CHEBI:33738"/>
        <dbReference type="ChEBI" id="CHEBI:128753"/>
        <dbReference type="ChEBI" id="CHEBI:128769"/>
        <dbReference type="EC" id="1.17.7.4"/>
    </reaction>
</comment>
<comment type="catalytic activity">
    <reaction evidence="1">
        <text>dimethylallyl diphosphate + 2 oxidized [2Fe-2S]-[ferredoxin] + H2O = (2E)-4-hydroxy-3-methylbut-2-enyl diphosphate + 2 reduced [2Fe-2S]-[ferredoxin] + 2 H(+)</text>
        <dbReference type="Rhea" id="RHEA:24825"/>
        <dbReference type="Rhea" id="RHEA-COMP:10000"/>
        <dbReference type="Rhea" id="RHEA-COMP:10001"/>
        <dbReference type="ChEBI" id="CHEBI:15377"/>
        <dbReference type="ChEBI" id="CHEBI:15378"/>
        <dbReference type="ChEBI" id="CHEBI:33737"/>
        <dbReference type="ChEBI" id="CHEBI:33738"/>
        <dbReference type="ChEBI" id="CHEBI:57623"/>
        <dbReference type="ChEBI" id="CHEBI:128753"/>
        <dbReference type="EC" id="1.17.7.4"/>
    </reaction>
</comment>
<comment type="cofactor">
    <cofactor evidence="1">
        <name>[4Fe-4S] cluster</name>
        <dbReference type="ChEBI" id="CHEBI:49883"/>
    </cofactor>
    <text evidence="1">Binds 1 [4Fe-4S] cluster per subunit.</text>
</comment>
<comment type="pathway">
    <text evidence="1">Isoprenoid biosynthesis; dimethylallyl diphosphate biosynthesis; dimethylallyl diphosphate from (2E)-4-hydroxy-3-methylbutenyl diphosphate: step 1/1.</text>
</comment>
<comment type="pathway">
    <text evidence="1">Isoprenoid biosynthesis; isopentenyl diphosphate biosynthesis via DXP pathway; isopentenyl diphosphate from 1-deoxy-D-xylulose 5-phosphate: step 6/6.</text>
</comment>
<comment type="similarity">
    <text evidence="1">Belongs to the IspH family.</text>
</comment>
<accession>Q6AA89</accession>
<keyword id="KW-0004">4Fe-4S</keyword>
<keyword id="KW-0408">Iron</keyword>
<keyword id="KW-0411">Iron-sulfur</keyword>
<keyword id="KW-0414">Isoprene biosynthesis</keyword>
<keyword id="KW-0479">Metal-binding</keyword>
<keyword id="KW-0560">Oxidoreductase</keyword>
<proteinExistence type="inferred from homology"/>
<gene>
    <name evidence="1" type="primary">ispH</name>
    <name type="ordered locus">PPA0572</name>
</gene>
<reference key="1">
    <citation type="journal article" date="2004" name="Science">
        <title>The complete genome sequence of Propionibacterium acnes, a commensal of human skin.</title>
        <authorList>
            <person name="Brueggemann H."/>
            <person name="Henne A."/>
            <person name="Hoster F."/>
            <person name="Liesegang H."/>
            <person name="Wiezer A."/>
            <person name="Strittmatter A."/>
            <person name="Hujer S."/>
            <person name="Duerre P."/>
            <person name="Gottschalk G."/>
        </authorList>
    </citation>
    <scope>NUCLEOTIDE SEQUENCE [LARGE SCALE GENOMIC DNA]</scope>
    <source>
        <strain>DSM 16379 / KPA171202</strain>
    </source>
</reference>
<feature type="chain" id="PRO_0000128853" description="4-hydroxy-3-methylbut-2-enyl diphosphate reductase">
    <location>
        <begin position="1"/>
        <end position="323"/>
    </location>
</feature>
<feature type="active site" description="Proton donor" evidence="1">
    <location>
        <position position="135"/>
    </location>
</feature>
<feature type="binding site" evidence="1">
    <location>
        <position position="21"/>
    </location>
    <ligand>
        <name>[4Fe-4S] cluster</name>
        <dbReference type="ChEBI" id="CHEBI:49883"/>
    </ligand>
</feature>
<feature type="binding site" evidence="1">
    <location>
        <position position="50"/>
    </location>
    <ligand>
        <name>(2E)-4-hydroxy-3-methylbut-2-enyl diphosphate</name>
        <dbReference type="ChEBI" id="CHEBI:128753"/>
    </ligand>
</feature>
<feature type="binding site" evidence="1">
    <location>
        <position position="50"/>
    </location>
    <ligand>
        <name>dimethylallyl diphosphate</name>
        <dbReference type="ChEBI" id="CHEBI:57623"/>
    </ligand>
</feature>
<feature type="binding site" evidence="1">
    <location>
        <position position="50"/>
    </location>
    <ligand>
        <name>isopentenyl diphosphate</name>
        <dbReference type="ChEBI" id="CHEBI:128769"/>
    </ligand>
</feature>
<feature type="binding site" evidence="1">
    <location>
        <position position="83"/>
    </location>
    <ligand>
        <name>(2E)-4-hydroxy-3-methylbut-2-enyl diphosphate</name>
        <dbReference type="ChEBI" id="CHEBI:128753"/>
    </ligand>
</feature>
<feature type="binding site" evidence="1">
    <location>
        <position position="83"/>
    </location>
    <ligand>
        <name>dimethylallyl diphosphate</name>
        <dbReference type="ChEBI" id="CHEBI:57623"/>
    </ligand>
</feature>
<feature type="binding site" evidence="1">
    <location>
        <position position="83"/>
    </location>
    <ligand>
        <name>isopentenyl diphosphate</name>
        <dbReference type="ChEBI" id="CHEBI:128769"/>
    </ligand>
</feature>
<feature type="binding site" evidence="1">
    <location>
        <position position="105"/>
    </location>
    <ligand>
        <name>[4Fe-4S] cluster</name>
        <dbReference type="ChEBI" id="CHEBI:49883"/>
    </ligand>
</feature>
<feature type="binding site" evidence="1">
    <location>
        <position position="133"/>
    </location>
    <ligand>
        <name>(2E)-4-hydroxy-3-methylbut-2-enyl diphosphate</name>
        <dbReference type="ChEBI" id="CHEBI:128753"/>
    </ligand>
</feature>
<feature type="binding site" evidence="1">
    <location>
        <position position="133"/>
    </location>
    <ligand>
        <name>dimethylallyl diphosphate</name>
        <dbReference type="ChEBI" id="CHEBI:57623"/>
    </ligand>
</feature>
<feature type="binding site" evidence="1">
    <location>
        <position position="133"/>
    </location>
    <ligand>
        <name>isopentenyl diphosphate</name>
        <dbReference type="ChEBI" id="CHEBI:128769"/>
    </ligand>
</feature>
<feature type="binding site" evidence="1">
    <location>
        <position position="173"/>
    </location>
    <ligand>
        <name>(2E)-4-hydroxy-3-methylbut-2-enyl diphosphate</name>
        <dbReference type="ChEBI" id="CHEBI:128753"/>
    </ligand>
</feature>
<feature type="binding site" evidence="1">
    <location>
        <position position="203"/>
    </location>
    <ligand>
        <name>[4Fe-4S] cluster</name>
        <dbReference type="ChEBI" id="CHEBI:49883"/>
    </ligand>
</feature>
<feature type="binding site" evidence="1">
    <location>
        <position position="231"/>
    </location>
    <ligand>
        <name>(2E)-4-hydroxy-3-methylbut-2-enyl diphosphate</name>
        <dbReference type="ChEBI" id="CHEBI:128753"/>
    </ligand>
</feature>
<feature type="binding site" evidence="1">
    <location>
        <position position="231"/>
    </location>
    <ligand>
        <name>dimethylallyl diphosphate</name>
        <dbReference type="ChEBI" id="CHEBI:57623"/>
    </ligand>
</feature>
<feature type="binding site" evidence="1">
    <location>
        <position position="231"/>
    </location>
    <ligand>
        <name>isopentenyl diphosphate</name>
        <dbReference type="ChEBI" id="CHEBI:128769"/>
    </ligand>
</feature>
<feature type="binding site" evidence="1">
    <location>
        <position position="232"/>
    </location>
    <ligand>
        <name>(2E)-4-hydroxy-3-methylbut-2-enyl diphosphate</name>
        <dbReference type="ChEBI" id="CHEBI:128753"/>
    </ligand>
</feature>
<feature type="binding site" evidence="1">
    <location>
        <position position="232"/>
    </location>
    <ligand>
        <name>dimethylallyl diphosphate</name>
        <dbReference type="ChEBI" id="CHEBI:57623"/>
    </ligand>
</feature>
<feature type="binding site" evidence="1">
    <location>
        <position position="232"/>
    </location>
    <ligand>
        <name>isopentenyl diphosphate</name>
        <dbReference type="ChEBI" id="CHEBI:128769"/>
    </ligand>
</feature>
<feature type="binding site" evidence="1">
    <location>
        <position position="233"/>
    </location>
    <ligand>
        <name>(2E)-4-hydroxy-3-methylbut-2-enyl diphosphate</name>
        <dbReference type="ChEBI" id="CHEBI:128753"/>
    </ligand>
</feature>
<feature type="binding site" evidence="1">
    <location>
        <position position="233"/>
    </location>
    <ligand>
        <name>dimethylallyl diphosphate</name>
        <dbReference type="ChEBI" id="CHEBI:57623"/>
    </ligand>
</feature>
<feature type="binding site" evidence="1">
    <location>
        <position position="233"/>
    </location>
    <ligand>
        <name>isopentenyl diphosphate</name>
        <dbReference type="ChEBI" id="CHEBI:128769"/>
    </ligand>
</feature>
<feature type="binding site" evidence="1">
    <location>
        <position position="276"/>
    </location>
    <ligand>
        <name>(2E)-4-hydroxy-3-methylbut-2-enyl diphosphate</name>
        <dbReference type="ChEBI" id="CHEBI:128753"/>
    </ligand>
</feature>
<feature type="binding site" evidence="1">
    <location>
        <position position="276"/>
    </location>
    <ligand>
        <name>dimethylallyl diphosphate</name>
        <dbReference type="ChEBI" id="CHEBI:57623"/>
    </ligand>
</feature>
<feature type="binding site" evidence="1">
    <location>
        <position position="276"/>
    </location>
    <ligand>
        <name>isopentenyl diphosphate</name>
        <dbReference type="ChEBI" id="CHEBI:128769"/>
    </ligand>
</feature>
<sequence>MAVTGACTNKKLYLAAPRGYCAGVDRAVVTVEKALEVYGAPVYVRKQIVHNRHVVETLEGRGAIFVDELDEVPDDALVVFSAHGVSPQVKKEATDRGLRTIDATCPLVTKVHHEAKRFANQDTQILLIGHAGHEEVEGTTGEAPENITLVQTPADVDGLALDRDRPVAWLSQTTLSVDETVETVDRIRDLHPQLIDPPSDDICYATQNRQHAVKQMAPQCDLVIVVGSKNSSNTGRLVEVALESGAKASYRVDNAGEIEETWLDGVSTIGVTSGASVPEALVQGVIDLLISKGWPPAEEETLIEESLSFALPPQLRKRRTTAK</sequence>